<gene>
    <name evidence="1" type="primary">dgt</name>
    <name type="ordered locus">b0160</name>
    <name type="ordered locus">JW0156</name>
</gene>
<sequence>MAQIDFRKKINWHRRYRSPQGVKTEHEILRIFESDRGRIINSPAIRRLQQKTQVFPLERNAAVRTRLTHSMEVQQVGRYIAKEILSRLKELKLLEAYGLDELTGPFESIVEMSCLMHDIGNPPFGHFGEAAINDWFRQRLHPEDAESQPLTDDRCSVAALRLRDGEEPLNELRRKIRQDLCHFEGNAQGIRLVHTLMRMNLTWAQVGGILKYTRPAWWRGETPETHHYLMKKPGYYLSEEAYIARLRKELNLALYSRFPLTWIMEAADDISYCVADLEDAVEKRIFTVEQLYHHLHEAWGQHEKGSLFSLVVENAWEKSRSNSLSRSTEDQFFMYLRVNTLNKLVPYAAQRFIDNLPAIFAGTFNHALLEDASECSDLLKLYKNVAVKHVFSHPDVERLELQGYRVISGLLEIYRPLLSLSLSDFTELVEKERVKRFPIESRLFHKLSTRHRLAYVEAVSKLPSDSPEFPLWEYYYRCRLLQDYISGMTDLYAWDEYRRLMAVEQ</sequence>
<feature type="initiator methionine" description="Removed" evidence="3">
    <location>
        <position position="1"/>
    </location>
</feature>
<feature type="chain" id="PRO_0000205279" description="Deoxyguanosinetriphosphate triphosphohydrolase">
    <location>
        <begin position="2"/>
        <end position="505"/>
    </location>
</feature>
<feature type="domain" description="HD" evidence="2">
    <location>
        <begin position="66"/>
        <end position="273"/>
    </location>
</feature>
<feature type="sequence conflict" description="In Ref. 2; AAA23716." evidence="4" ref="2">
    <original>T</original>
    <variation>R</variation>
    <location>
        <position position="363"/>
    </location>
</feature>
<feature type="sequence conflict" description="In Ref. 2; AAA23716." evidence="4" ref="2">
    <original>R</original>
    <variation>P</variation>
    <location>
        <position position="450"/>
    </location>
</feature>
<feature type="helix" evidence="10">
    <location>
        <begin position="6"/>
        <end position="8"/>
    </location>
</feature>
<feature type="strand" evidence="10">
    <location>
        <begin position="15"/>
        <end position="17"/>
    </location>
</feature>
<feature type="helix" evidence="10">
    <location>
        <begin position="25"/>
        <end position="40"/>
    </location>
</feature>
<feature type="helix" evidence="10">
    <location>
        <begin position="43"/>
        <end position="46"/>
    </location>
</feature>
<feature type="helix" evidence="10">
    <location>
        <begin position="47"/>
        <end position="50"/>
    </location>
</feature>
<feature type="strand" evidence="10">
    <location>
        <begin position="51"/>
        <end position="54"/>
    </location>
</feature>
<feature type="helix" evidence="10">
    <location>
        <begin position="66"/>
        <end position="90"/>
    </location>
</feature>
<feature type="turn" evidence="10">
    <location>
        <begin position="94"/>
        <end position="98"/>
    </location>
</feature>
<feature type="helix" evidence="10">
    <location>
        <begin position="103"/>
        <end position="115"/>
    </location>
</feature>
<feature type="turn" evidence="9">
    <location>
        <begin position="116"/>
        <end position="120"/>
    </location>
</feature>
<feature type="turn" evidence="10">
    <location>
        <begin position="123"/>
        <end position="125"/>
    </location>
</feature>
<feature type="helix" evidence="10">
    <location>
        <begin position="126"/>
        <end position="140"/>
    </location>
</feature>
<feature type="helix" evidence="10">
    <location>
        <begin position="142"/>
        <end position="144"/>
    </location>
</feature>
<feature type="strand" evidence="10">
    <location>
        <begin position="145"/>
        <end position="148"/>
    </location>
</feature>
<feature type="helix" evidence="5">
    <location>
        <begin position="158"/>
        <end position="160"/>
    </location>
</feature>
<feature type="turn" evidence="7">
    <location>
        <begin position="164"/>
        <end position="166"/>
    </location>
</feature>
<feature type="helix" evidence="10">
    <location>
        <begin position="167"/>
        <end position="180"/>
    </location>
</feature>
<feature type="helix" evidence="10">
    <location>
        <begin position="185"/>
        <end position="194"/>
    </location>
</feature>
<feature type="turn" evidence="6">
    <location>
        <begin position="195"/>
        <end position="197"/>
    </location>
</feature>
<feature type="helix" evidence="10">
    <location>
        <begin position="203"/>
        <end position="207"/>
    </location>
</feature>
<feature type="helix" evidence="10">
    <location>
        <begin position="224"/>
        <end position="226"/>
    </location>
</feature>
<feature type="turn" evidence="10">
    <location>
        <begin position="227"/>
        <end position="230"/>
    </location>
</feature>
<feature type="strand" evidence="10">
    <location>
        <begin position="231"/>
        <end position="235"/>
    </location>
</feature>
<feature type="helix" evidence="10">
    <location>
        <begin position="237"/>
        <end position="239"/>
    </location>
</feature>
<feature type="helix" evidence="10">
    <location>
        <begin position="240"/>
        <end position="250"/>
    </location>
</feature>
<feature type="helix" evidence="10">
    <location>
        <begin position="261"/>
        <end position="270"/>
    </location>
</feature>
<feature type="helix" evidence="10">
    <location>
        <begin position="274"/>
        <end position="282"/>
    </location>
</feature>
<feature type="helix" evidence="10">
    <location>
        <begin position="288"/>
        <end position="299"/>
    </location>
</feature>
<feature type="strand" evidence="8">
    <location>
        <begin position="304"/>
        <end position="306"/>
    </location>
</feature>
<feature type="turn" evidence="10">
    <location>
        <begin position="309"/>
        <end position="311"/>
    </location>
</feature>
<feature type="helix" evidence="10">
    <location>
        <begin position="312"/>
        <end position="316"/>
    </location>
</feature>
<feature type="strand" evidence="8">
    <location>
        <begin position="324"/>
        <end position="326"/>
    </location>
</feature>
<feature type="turn" evidence="10">
    <location>
        <begin position="330"/>
        <end position="332"/>
    </location>
</feature>
<feature type="helix" evidence="10">
    <location>
        <begin position="333"/>
        <end position="354"/>
    </location>
</feature>
<feature type="helix" evidence="10">
    <location>
        <begin position="356"/>
        <end position="361"/>
    </location>
</feature>
<feature type="turn" evidence="5">
    <location>
        <begin position="371"/>
        <end position="373"/>
    </location>
</feature>
<feature type="helix" evidence="10">
    <location>
        <begin position="374"/>
        <end position="389"/>
    </location>
</feature>
<feature type="turn" evidence="10">
    <location>
        <begin position="390"/>
        <end position="392"/>
    </location>
</feature>
<feature type="helix" evidence="10">
    <location>
        <begin position="394"/>
        <end position="413"/>
    </location>
</feature>
<feature type="helix" evidence="10">
    <location>
        <begin position="415"/>
        <end position="418"/>
    </location>
</feature>
<feature type="helix" evidence="10">
    <location>
        <begin position="422"/>
        <end position="431"/>
    </location>
</feature>
<feature type="helix" evidence="10">
    <location>
        <begin position="438"/>
        <end position="444"/>
    </location>
</feature>
<feature type="helix" evidence="10">
    <location>
        <begin position="449"/>
        <end position="459"/>
    </location>
</feature>
<feature type="strand" evidence="10">
    <location>
        <begin position="464"/>
        <end position="466"/>
    </location>
</feature>
<feature type="helix" evidence="10">
    <location>
        <begin position="469"/>
        <end position="486"/>
    </location>
</feature>
<feature type="helix" evidence="10">
    <location>
        <begin position="490"/>
        <end position="500"/>
    </location>
</feature>
<evidence type="ECO:0000255" key="1">
    <source>
        <dbReference type="HAMAP-Rule" id="MF_00030"/>
    </source>
</evidence>
<evidence type="ECO:0000255" key="2">
    <source>
        <dbReference type="PROSITE-ProRule" id="PRU01175"/>
    </source>
</evidence>
<evidence type="ECO:0000269" key="3">
    <source>
    </source>
</evidence>
<evidence type="ECO:0000305" key="4"/>
<evidence type="ECO:0007829" key="5">
    <source>
        <dbReference type="PDB" id="6OI7"/>
    </source>
</evidence>
<evidence type="ECO:0007829" key="6">
    <source>
        <dbReference type="PDB" id="6OIV"/>
    </source>
</evidence>
<evidence type="ECO:0007829" key="7">
    <source>
        <dbReference type="PDB" id="6OIX"/>
    </source>
</evidence>
<evidence type="ECO:0007829" key="8">
    <source>
        <dbReference type="PDB" id="6OIY"/>
    </source>
</evidence>
<evidence type="ECO:0007829" key="9">
    <source>
        <dbReference type="PDB" id="7U65"/>
    </source>
</evidence>
<evidence type="ECO:0007829" key="10">
    <source>
        <dbReference type="PDB" id="7U67"/>
    </source>
</evidence>
<protein>
    <recommendedName>
        <fullName evidence="1">Deoxyguanosinetriphosphate triphosphohydrolase</fullName>
        <shortName evidence="1">dGTP triphosphohydrolase</shortName>
        <shortName evidence="1">dGTPase</shortName>
        <ecNumber evidence="1">3.1.5.1</ecNumber>
    </recommendedName>
</protein>
<organism>
    <name type="scientific">Escherichia coli (strain K12)</name>
    <dbReference type="NCBI Taxonomy" id="83333"/>
    <lineage>
        <taxon>Bacteria</taxon>
        <taxon>Pseudomonadati</taxon>
        <taxon>Pseudomonadota</taxon>
        <taxon>Gammaproteobacteria</taxon>
        <taxon>Enterobacterales</taxon>
        <taxon>Enterobacteriaceae</taxon>
        <taxon>Escherichia</taxon>
    </lineage>
</organism>
<reference key="1">
    <citation type="journal article" date="1990" name="Proc. Natl. Acad. Sci. U.S.A.">
        <title>Structure and regulation of the gene for dGTP triphosphohydrolase from Escherichia coli.</title>
        <authorList>
            <person name="Wurgler S.M."/>
            <person name="Richardson C.C."/>
        </authorList>
    </citation>
    <scope>NUCLEOTIDE SEQUENCE [GENOMIC DNA]</scope>
    <source>
        <strain>HR42</strain>
        <strain>HR44</strain>
    </source>
</reference>
<reference key="2">
    <citation type="journal article" date="1990" name="Gene">
        <title>Primary structure of the deoxyguanosine triphosphate triphosphohydrolase-encoding gene (dgt) of Escherichia coli.</title>
        <authorList>
            <person name="Quirk S."/>
            <person name="Bhatnagar S.K."/>
            <person name="Bessman M.J."/>
        </authorList>
    </citation>
    <scope>NUCLEOTIDE SEQUENCE [GENOMIC DNA]</scope>
</reference>
<reference key="3">
    <citation type="journal article" date="1994" name="Nucleic Acids Res.">
        <title>Systematic sequencing of the Escherichia coli genome: analysis of the 2.4-4.1 min (110,917-193,643 bp) region.</title>
        <authorList>
            <person name="Fujita N."/>
            <person name="Mori H."/>
            <person name="Yura T."/>
            <person name="Ishihama A."/>
        </authorList>
    </citation>
    <scope>NUCLEOTIDE SEQUENCE [LARGE SCALE GENOMIC DNA]</scope>
    <source>
        <strain>K12 / W3110 / ATCC 27325 / DSM 5911</strain>
    </source>
</reference>
<reference key="4">
    <citation type="submission" date="1997-01" db="EMBL/GenBank/DDBJ databases">
        <title>Sequence of minutes 4-25 of Escherichia coli.</title>
        <authorList>
            <person name="Chung E."/>
            <person name="Allen E."/>
            <person name="Araujo R."/>
            <person name="Aparicio A.M."/>
            <person name="Davis K."/>
            <person name="Duncan M."/>
            <person name="Federspiel N."/>
            <person name="Hyman R."/>
            <person name="Kalman S."/>
            <person name="Komp C."/>
            <person name="Kurdi O."/>
            <person name="Lew H."/>
            <person name="Lin D."/>
            <person name="Namath A."/>
            <person name="Oefner P."/>
            <person name="Roberts D."/>
            <person name="Schramm S."/>
            <person name="Davis R.W."/>
        </authorList>
    </citation>
    <scope>NUCLEOTIDE SEQUENCE [LARGE SCALE GENOMIC DNA]</scope>
    <source>
        <strain>K12 / MG1655 / ATCC 47076</strain>
    </source>
</reference>
<reference key="5">
    <citation type="journal article" date="1997" name="Science">
        <title>The complete genome sequence of Escherichia coli K-12.</title>
        <authorList>
            <person name="Blattner F.R."/>
            <person name="Plunkett G. III"/>
            <person name="Bloch C.A."/>
            <person name="Perna N.T."/>
            <person name="Burland V."/>
            <person name="Riley M."/>
            <person name="Collado-Vides J."/>
            <person name="Glasner J.D."/>
            <person name="Rode C.K."/>
            <person name="Mayhew G.F."/>
            <person name="Gregor J."/>
            <person name="Davis N.W."/>
            <person name="Kirkpatrick H.A."/>
            <person name="Goeden M.A."/>
            <person name="Rose D.J."/>
            <person name="Mau B."/>
            <person name="Shao Y."/>
        </authorList>
    </citation>
    <scope>NUCLEOTIDE SEQUENCE [LARGE SCALE GENOMIC DNA]</scope>
    <source>
        <strain>K12 / MG1655 / ATCC 47076</strain>
    </source>
</reference>
<reference key="6">
    <citation type="journal article" date="2006" name="Mol. Syst. Biol.">
        <title>Highly accurate genome sequences of Escherichia coli K-12 strains MG1655 and W3110.</title>
        <authorList>
            <person name="Hayashi K."/>
            <person name="Morooka N."/>
            <person name="Yamamoto Y."/>
            <person name="Fujita K."/>
            <person name="Isono K."/>
            <person name="Choi S."/>
            <person name="Ohtsubo E."/>
            <person name="Baba T."/>
            <person name="Wanner B.L."/>
            <person name="Mori H."/>
            <person name="Horiuchi T."/>
        </authorList>
    </citation>
    <scope>NUCLEOTIDE SEQUENCE [LARGE SCALE GENOMIC DNA]</scope>
    <source>
        <strain>K12 / W3110 / ATCC 27325 / DSM 5911</strain>
    </source>
</reference>
<reference key="7">
    <citation type="journal article" date="1988" name="J. Biol. Chem.">
        <title>The purification and properties of deoxyguanosine triphosphate triphosphohydrolase from Escherichia coli.</title>
        <authorList>
            <person name="Seto D."/>
            <person name="Bhatnagar S.K."/>
            <person name="Bessman M.J."/>
        </authorList>
    </citation>
    <scope>PROTEIN SEQUENCE OF 2-16</scope>
    <scope>FUNCTION</scope>
    <scope>CATALYTIC ACTIVITY</scope>
    <scope>COFACTOR</scope>
    <scope>SUBUNIT</scope>
</reference>
<accession>P15723</accession>
<proteinExistence type="evidence at protein level"/>
<keyword id="KW-0002">3D-structure</keyword>
<keyword id="KW-0903">Direct protein sequencing</keyword>
<keyword id="KW-0378">Hydrolase</keyword>
<keyword id="KW-0460">Magnesium</keyword>
<keyword id="KW-1185">Reference proteome</keyword>
<comment type="function">
    <text evidence="1 3">dGTPase preferentially hydrolyzes dGTP over the other canonical NTPs.</text>
</comment>
<comment type="catalytic activity">
    <reaction evidence="1 3">
        <text>dGTP + H2O = 2'-deoxyguanosine + triphosphate + H(+)</text>
        <dbReference type="Rhea" id="RHEA:15193"/>
        <dbReference type="ChEBI" id="CHEBI:15377"/>
        <dbReference type="ChEBI" id="CHEBI:15378"/>
        <dbReference type="ChEBI" id="CHEBI:17172"/>
        <dbReference type="ChEBI" id="CHEBI:18036"/>
        <dbReference type="ChEBI" id="CHEBI:61429"/>
        <dbReference type="EC" id="3.1.5.1"/>
    </reaction>
</comment>
<comment type="cofactor">
    <cofactor evidence="1 3">
        <name>Mg(2+)</name>
        <dbReference type="ChEBI" id="CHEBI:18420"/>
    </cofactor>
</comment>
<comment type="subunit">
    <text evidence="1 3">Homotetramer.</text>
</comment>
<comment type="similarity">
    <text evidence="1">Belongs to the dGTPase family. Type 1 subfamily.</text>
</comment>
<comment type="sequence caution" evidence="4">
    <conflict type="frameshift">
        <sequence resource="EMBL-CDS" id="AAA23716"/>
    </conflict>
</comment>
<dbReference type="EC" id="3.1.5.1" evidence="1"/>
<dbReference type="EMBL" id="M31772">
    <property type="protein sequence ID" value="AAA23679.1"/>
    <property type="molecule type" value="Genomic_DNA"/>
</dbReference>
<dbReference type="EMBL" id="M29955">
    <property type="protein sequence ID" value="AAA23716.1"/>
    <property type="status" value="ALT_FRAME"/>
    <property type="molecule type" value="Genomic_DNA"/>
</dbReference>
<dbReference type="EMBL" id="U70214">
    <property type="protein sequence ID" value="AAB08590.1"/>
    <property type="molecule type" value="Genomic_DNA"/>
</dbReference>
<dbReference type="EMBL" id="U00096">
    <property type="protein sequence ID" value="AAC73271.1"/>
    <property type="molecule type" value="Genomic_DNA"/>
</dbReference>
<dbReference type="EMBL" id="AP009048">
    <property type="protein sequence ID" value="BAB96737.1"/>
    <property type="molecule type" value="Genomic_DNA"/>
</dbReference>
<dbReference type="PIR" id="A35993">
    <property type="entry name" value="A35993"/>
</dbReference>
<dbReference type="RefSeq" id="NP_414702.1">
    <property type="nucleotide sequence ID" value="NC_000913.3"/>
</dbReference>
<dbReference type="RefSeq" id="WP_000057073.1">
    <property type="nucleotide sequence ID" value="NZ_LN832404.1"/>
</dbReference>
<dbReference type="PDB" id="4X9E">
    <property type="method" value="X-ray"/>
    <property type="resolution" value="3.10 A"/>
    <property type="chains" value="A/B/C/D/E/F=1-505"/>
</dbReference>
<dbReference type="PDB" id="4XDS">
    <property type="method" value="X-ray"/>
    <property type="resolution" value="3.35 A"/>
    <property type="chains" value="A/B/C/D/E/F=1-505"/>
</dbReference>
<dbReference type="PDB" id="6OI7">
    <property type="method" value="X-ray"/>
    <property type="resolution" value="2.90 A"/>
    <property type="chains" value="A/B/C/D/E/F=1-505"/>
</dbReference>
<dbReference type="PDB" id="6OIV">
    <property type="method" value="X-ray"/>
    <property type="resolution" value="3.06 A"/>
    <property type="chains" value="A/B/C/D/E/F=1-505"/>
</dbReference>
<dbReference type="PDB" id="6OIW">
    <property type="method" value="X-ray"/>
    <property type="resolution" value="3.35 A"/>
    <property type="chains" value="A/B/C/D/E/F=1-505"/>
</dbReference>
<dbReference type="PDB" id="6OIX">
    <property type="method" value="X-ray"/>
    <property type="resolution" value="3.15 A"/>
    <property type="chains" value="A/B/C/D/E/F=1-505"/>
</dbReference>
<dbReference type="PDB" id="6OIY">
    <property type="method" value="X-ray"/>
    <property type="resolution" value="3.29 A"/>
    <property type="chains" value="A/B/C/D/E/F=1-505"/>
</dbReference>
<dbReference type="PDB" id="7U65">
    <property type="method" value="EM"/>
    <property type="resolution" value="2.80 A"/>
    <property type="chains" value="A/B/C/D/E/F=1-505"/>
</dbReference>
<dbReference type="PDB" id="7U66">
    <property type="method" value="EM"/>
    <property type="resolution" value="3.10 A"/>
    <property type="chains" value="A/B/C/D/E/F=1-505"/>
</dbReference>
<dbReference type="PDB" id="7U67">
    <property type="method" value="EM"/>
    <property type="resolution" value="2.50 A"/>
    <property type="chains" value="A/B/C/D/E/F=1-505"/>
</dbReference>
<dbReference type="PDBsum" id="4X9E"/>
<dbReference type="PDBsum" id="4XDS"/>
<dbReference type="PDBsum" id="6OI7"/>
<dbReference type="PDBsum" id="6OIV"/>
<dbReference type="PDBsum" id="6OIW"/>
<dbReference type="PDBsum" id="6OIX"/>
<dbReference type="PDBsum" id="6OIY"/>
<dbReference type="PDBsum" id="7U65"/>
<dbReference type="PDBsum" id="7U66"/>
<dbReference type="PDBsum" id="7U67"/>
<dbReference type="EMDB" id="EMD-26360"/>
<dbReference type="EMDB" id="EMD-26361"/>
<dbReference type="EMDB" id="EMD-26362"/>
<dbReference type="SMR" id="P15723"/>
<dbReference type="BioGRID" id="4260993">
    <property type="interactions" value="9"/>
</dbReference>
<dbReference type="DIP" id="DIP-9437N"/>
<dbReference type="FunCoup" id="P15723">
    <property type="interactions" value="321"/>
</dbReference>
<dbReference type="IntAct" id="P15723">
    <property type="interactions" value="5"/>
</dbReference>
<dbReference type="STRING" id="511145.b0160"/>
<dbReference type="jPOST" id="P15723"/>
<dbReference type="PaxDb" id="511145-b0160"/>
<dbReference type="EnsemblBacteria" id="AAC73271">
    <property type="protein sequence ID" value="AAC73271"/>
    <property type="gene ID" value="b0160"/>
</dbReference>
<dbReference type="GeneID" id="947177"/>
<dbReference type="KEGG" id="ecj:JW0156"/>
<dbReference type="KEGG" id="eco:b0160"/>
<dbReference type="KEGG" id="ecoc:C3026_00730"/>
<dbReference type="PATRIC" id="fig|1411691.4.peg.2120"/>
<dbReference type="EchoBASE" id="EB0221"/>
<dbReference type="eggNOG" id="COG0232">
    <property type="taxonomic scope" value="Bacteria"/>
</dbReference>
<dbReference type="HOGENOM" id="CLU_028163_2_1_6"/>
<dbReference type="InParanoid" id="P15723"/>
<dbReference type="OMA" id="ICYTIID"/>
<dbReference type="OrthoDB" id="9803619at2"/>
<dbReference type="PhylomeDB" id="P15723"/>
<dbReference type="BioCyc" id="EcoCyc:DGTPTRIPHYDRO-MONOMER"/>
<dbReference type="BioCyc" id="MetaCyc:DGTPTRIPHYDRO-MONOMER"/>
<dbReference type="BRENDA" id="3.1.5.1">
    <property type="organism ID" value="2026"/>
</dbReference>
<dbReference type="SABIO-RK" id="P15723"/>
<dbReference type="EvolutionaryTrace" id="P15723"/>
<dbReference type="PRO" id="PR:P15723"/>
<dbReference type="Proteomes" id="UP000000625">
    <property type="component" value="Chromosome"/>
</dbReference>
<dbReference type="GO" id="GO:0050897">
    <property type="term" value="F:cobalt ion binding"/>
    <property type="evidence" value="ECO:0000314"/>
    <property type="project" value="EcoliWiki"/>
</dbReference>
<dbReference type="GO" id="GO:0008832">
    <property type="term" value="F:dGTPase activity"/>
    <property type="evidence" value="ECO:0000314"/>
    <property type="project" value="EcoCyc"/>
</dbReference>
<dbReference type="GO" id="GO:0003924">
    <property type="term" value="F:GTPase activity"/>
    <property type="evidence" value="ECO:0000314"/>
    <property type="project" value="EcoliWiki"/>
</dbReference>
<dbReference type="GO" id="GO:0042802">
    <property type="term" value="F:identical protein binding"/>
    <property type="evidence" value="ECO:0000314"/>
    <property type="project" value="EcoCyc"/>
</dbReference>
<dbReference type="GO" id="GO:0000287">
    <property type="term" value="F:magnesium ion binding"/>
    <property type="evidence" value="ECO:0007669"/>
    <property type="project" value="UniProtKB-UniRule"/>
</dbReference>
<dbReference type="GO" id="GO:0030145">
    <property type="term" value="F:manganese ion binding"/>
    <property type="evidence" value="ECO:0000314"/>
    <property type="project" value="EcoliWiki"/>
</dbReference>
<dbReference type="GO" id="GO:0003697">
    <property type="term" value="F:single-stranded DNA binding"/>
    <property type="evidence" value="ECO:0000314"/>
    <property type="project" value="EcoCyc"/>
</dbReference>
<dbReference type="GO" id="GO:0006203">
    <property type="term" value="P:dGTP catabolic process"/>
    <property type="evidence" value="ECO:0000318"/>
    <property type="project" value="GO_Central"/>
</dbReference>
<dbReference type="GO" id="GO:0015949">
    <property type="term" value="P:nucleobase-containing small molecule interconversion"/>
    <property type="evidence" value="ECO:0000314"/>
    <property type="project" value="EcoCyc"/>
</dbReference>
<dbReference type="GO" id="GO:0043099">
    <property type="term" value="P:pyrimidine deoxyribonucleoside salvage"/>
    <property type="evidence" value="ECO:0000316"/>
    <property type="project" value="EcoCyc"/>
</dbReference>
<dbReference type="CDD" id="cd00077">
    <property type="entry name" value="HDc"/>
    <property type="match status" value="1"/>
</dbReference>
<dbReference type="FunFam" id="1.10.3210.10:FF:000009">
    <property type="entry name" value="Deoxyguanosinetriphosphate triphosphohydrolase"/>
    <property type="match status" value="1"/>
</dbReference>
<dbReference type="FunFam" id="1.10.3210.10:FF:000010">
    <property type="entry name" value="Deoxyguanosinetriphosphate triphosphohydrolase"/>
    <property type="match status" value="1"/>
</dbReference>
<dbReference type="FunFam" id="1.10.3410.10:FF:000001">
    <property type="entry name" value="Deoxyguanosinetriphosphate triphosphohydrolase"/>
    <property type="match status" value="1"/>
</dbReference>
<dbReference type="Gene3D" id="1.10.3210.10">
    <property type="entry name" value="Hypothetical protein af1432"/>
    <property type="match status" value="2"/>
</dbReference>
<dbReference type="Gene3D" id="1.10.3410.10">
    <property type="entry name" value="putative deoxyguanosinetriphosphate triphosphohydrolase like domain"/>
    <property type="match status" value="1"/>
</dbReference>
<dbReference type="HAMAP" id="MF_00030">
    <property type="entry name" value="dGTPase_type1"/>
    <property type="match status" value="1"/>
</dbReference>
<dbReference type="InterPro" id="IPR023293">
    <property type="entry name" value="dGTP_triP_hydro_central_sf"/>
</dbReference>
<dbReference type="InterPro" id="IPR006261">
    <property type="entry name" value="dGTPase"/>
</dbReference>
<dbReference type="InterPro" id="IPR050135">
    <property type="entry name" value="dGTPase-like"/>
</dbReference>
<dbReference type="InterPro" id="IPR020779">
    <property type="entry name" value="dNTPase_1"/>
</dbReference>
<dbReference type="InterPro" id="IPR003607">
    <property type="entry name" value="HD/PDEase_dom"/>
</dbReference>
<dbReference type="InterPro" id="IPR006674">
    <property type="entry name" value="HD_domain"/>
</dbReference>
<dbReference type="NCBIfam" id="TIGR01353">
    <property type="entry name" value="dGTP_triPase"/>
    <property type="match status" value="1"/>
</dbReference>
<dbReference type="NCBIfam" id="NF003429">
    <property type="entry name" value="PRK04926.1"/>
    <property type="match status" value="1"/>
</dbReference>
<dbReference type="PANTHER" id="PTHR11373:SF32">
    <property type="entry name" value="DEOXYGUANOSINETRIPHOSPHATE TRIPHOSPHOHYDROLASE"/>
    <property type="match status" value="1"/>
</dbReference>
<dbReference type="PANTHER" id="PTHR11373">
    <property type="entry name" value="DEOXYNUCLEOSIDE TRIPHOSPHATE TRIPHOSPHOHYDROLASE"/>
    <property type="match status" value="1"/>
</dbReference>
<dbReference type="Pfam" id="PF01966">
    <property type="entry name" value="HD"/>
    <property type="match status" value="1"/>
</dbReference>
<dbReference type="SMART" id="SM00471">
    <property type="entry name" value="HDc"/>
    <property type="match status" value="1"/>
</dbReference>
<dbReference type="SUPFAM" id="SSF109604">
    <property type="entry name" value="HD-domain/PDEase-like"/>
    <property type="match status" value="1"/>
</dbReference>
<dbReference type="PROSITE" id="PS51831">
    <property type="entry name" value="HD"/>
    <property type="match status" value="1"/>
</dbReference>
<name>DGTP_ECOLI</name>